<accession>P10640</accession>
<sequence length="217" mass="24746">MIRVNNVCKKYHTNSGWKTVLKNINFELQKGEKIGILGRNGAGKSTLIRLMSGVEPPTSGTIERSMSISWPLAFSGAFQGSLTGMDNLRFICRLYDVDPDYVTRFTKEFSELGDYLYEPVKKYSSGMKARLAFALSLSVEFDCYLIDEVIAVGDSRFAEKCKYELFEKRKDRSIILVSHSPSAMKSYCDNAVVLENGIMHHFEDMDKAYQYYNETQK</sequence>
<keyword id="KW-0067">ATP-binding</keyword>
<keyword id="KW-0972">Capsule biogenesis/degradation</keyword>
<keyword id="KW-0997">Cell inner membrane</keyword>
<keyword id="KW-1003">Cell membrane</keyword>
<keyword id="KW-0472">Membrane</keyword>
<keyword id="KW-0547">Nucleotide-binding</keyword>
<keyword id="KW-0625">Polysaccharide transport</keyword>
<keyword id="KW-0762">Sugar transport</keyword>
<keyword id="KW-0813">Transport</keyword>
<protein>
    <recommendedName>
        <fullName>ATP-binding protein BexA</fullName>
    </recommendedName>
</protein>
<reference key="1">
    <citation type="journal article" date="1988" name="Cell">
        <title>Capsule loss in H. influenzae type b occurs by recombination-mediated disruption of a gene essential for polysaccharide export.</title>
        <authorList>
            <person name="Kroll J.S."/>
            <person name="Hopkins I."/>
            <person name="Moxon E.R."/>
        </authorList>
    </citation>
    <scope>NUCLEOTIDE SEQUENCE [GENOMIC DNA]</scope>
    <source>
        <strain>Eagan / Serotype B</strain>
    </source>
</reference>
<reference key="2">
    <citation type="journal article" date="1990" name="Mol. Microbiol.">
        <title>The bex locus in encapsulated Haemophilus influenzae: a chromosomal region involved in capsule polysaccharide export.</title>
        <authorList>
            <person name="Kroll J.S."/>
            <person name="Loynds B."/>
            <person name="Brophy L.N."/>
            <person name="Moxon E.R."/>
        </authorList>
    </citation>
    <scope>NUCLEOTIDE SEQUENCE [GENOMIC DNA]</scope>
    <source>
        <strain>Eagan / Serotype B</strain>
    </source>
</reference>
<proteinExistence type="inferred from homology"/>
<feature type="chain" id="PRO_0000091947" description="ATP-binding protein BexA">
    <location>
        <begin position="1"/>
        <end position="217"/>
    </location>
</feature>
<feature type="domain" description="ABC transporter" evidence="1">
    <location>
        <begin position="2"/>
        <end position="217"/>
    </location>
</feature>
<feature type="binding site" evidence="1">
    <location>
        <begin position="38"/>
        <end position="45"/>
    </location>
    <ligand>
        <name>ATP</name>
        <dbReference type="ChEBI" id="CHEBI:30616"/>
    </ligand>
</feature>
<organism>
    <name type="scientific">Haemophilus influenzae</name>
    <dbReference type="NCBI Taxonomy" id="727"/>
    <lineage>
        <taxon>Bacteria</taxon>
        <taxon>Pseudomonadati</taxon>
        <taxon>Pseudomonadota</taxon>
        <taxon>Gammaproteobacteria</taxon>
        <taxon>Pasteurellales</taxon>
        <taxon>Pasteurellaceae</taxon>
        <taxon>Haemophilus</taxon>
    </lineage>
</organism>
<evidence type="ECO:0000255" key="1">
    <source>
        <dbReference type="PROSITE-ProRule" id="PRU00434"/>
    </source>
</evidence>
<evidence type="ECO:0000305" key="2"/>
<name>BEXA_HAEIF</name>
<comment type="function">
    <text>Putative ATP-binding protein, and an energy-coupling component of capsule polysaccharide export apparatus.</text>
</comment>
<comment type="subcellular location">
    <subcellularLocation>
        <location evidence="2">Cell inner membrane</location>
        <topology evidence="2">Peripheral membrane protein</topology>
    </subcellularLocation>
</comment>
<comment type="similarity">
    <text evidence="2">Belongs to the ABC transporter superfamily.</text>
</comment>
<dbReference type="EMBL" id="M19995">
    <property type="protein sequence ID" value="AAA24944.1"/>
    <property type="molecule type" value="Genomic_DNA"/>
</dbReference>
<dbReference type="EMBL" id="X54987">
    <property type="protein sequence ID" value="CAA38734.1"/>
    <property type="molecule type" value="Genomic_DNA"/>
</dbReference>
<dbReference type="PIR" id="S12235">
    <property type="entry name" value="BVHIXA"/>
</dbReference>
<dbReference type="RefSeq" id="WP_015702020.1">
    <property type="nucleotide sequence ID" value="NZ_UEXC01000034.1"/>
</dbReference>
<dbReference type="SMR" id="P10640"/>
<dbReference type="GO" id="GO:0005886">
    <property type="term" value="C:plasma membrane"/>
    <property type="evidence" value="ECO:0007669"/>
    <property type="project" value="UniProtKB-SubCell"/>
</dbReference>
<dbReference type="GO" id="GO:0140359">
    <property type="term" value="F:ABC-type transporter activity"/>
    <property type="evidence" value="ECO:0007669"/>
    <property type="project" value="InterPro"/>
</dbReference>
<dbReference type="GO" id="GO:0005524">
    <property type="term" value="F:ATP binding"/>
    <property type="evidence" value="ECO:0007669"/>
    <property type="project" value="UniProtKB-KW"/>
</dbReference>
<dbReference type="GO" id="GO:0016887">
    <property type="term" value="F:ATP hydrolysis activity"/>
    <property type="evidence" value="ECO:0007669"/>
    <property type="project" value="InterPro"/>
</dbReference>
<dbReference type="GO" id="GO:0015774">
    <property type="term" value="P:polysaccharide transport"/>
    <property type="evidence" value="ECO:0007669"/>
    <property type="project" value="UniProtKB-KW"/>
</dbReference>
<dbReference type="CDD" id="cd03220">
    <property type="entry name" value="ABC_KpsT_Wzt"/>
    <property type="match status" value="1"/>
</dbReference>
<dbReference type="Gene3D" id="3.40.50.300">
    <property type="entry name" value="P-loop containing nucleotide triphosphate hydrolases"/>
    <property type="match status" value="1"/>
</dbReference>
<dbReference type="InterPro" id="IPR003593">
    <property type="entry name" value="AAA+_ATPase"/>
</dbReference>
<dbReference type="InterPro" id="IPR003439">
    <property type="entry name" value="ABC_transporter-like_ATP-bd"/>
</dbReference>
<dbReference type="InterPro" id="IPR017871">
    <property type="entry name" value="ABC_transporter-like_CS"/>
</dbReference>
<dbReference type="InterPro" id="IPR015860">
    <property type="entry name" value="ABC_transpr_TagH-like"/>
</dbReference>
<dbReference type="InterPro" id="IPR050683">
    <property type="entry name" value="Bact_Polysacc_Export_ATP-bd"/>
</dbReference>
<dbReference type="InterPro" id="IPR027417">
    <property type="entry name" value="P-loop_NTPase"/>
</dbReference>
<dbReference type="PANTHER" id="PTHR46743">
    <property type="entry name" value="TEICHOIC ACIDS EXPORT ATP-BINDING PROTEIN TAGH"/>
    <property type="match status" value="1"/>
</dbReference>
<dbReference type="PANTHER" id="PTHR46743:SF2">
    <property type="entry name" value="TEICHOIC ACIDS EXPORT ATP-BINDING PROTEIN TAGH"/>
    <property type="match status" value="1"/>
</dbReference>
<dbReference type="Pfam" id="PF00005">
    <property type="entry name" value="ABC_tran"/>
    <property type="match status" value="1"/>
</dbReference>
<dbReference type="SMART" id="SM00382">
    <property type="entry name" value="AAA"/>
    <property type="match status" value="1"/>
</dbReference>
<dbReference type="SUPFAM" id="SSF52540">
    <property type="entry name" value="P-loop containing nucleoside triphosphate hydrolases"/>
    <property type="match status" value="1"/>
</dbReference>
<dbReference type="PROSITE" id="PS00211">
    <property type="entry name" value="ABC_TRANSPORTER_1"/>
    <property type="match status" value="1"/>
</dbReference>
<dbReference type="PROSITE" id="PS50893">
    <property type="entry name" value="ABC_TRANSPORTER_2"/>
    <property type="match status" value="1"/>
</dbReference>
<gene>
    <name type="primary">bexA</name>
</gene>